<sequence length="247" mass="28312">MSEKIAILSAYSFVNIEEPESLIPKLLFVGKRKYVKGTILLSKEGFNGSFSGSYESVNLVLEELKKLTNTKDVNVKINCSEIHPFQKLKVRLKKEIVAMNVDNLNVNLFKGEYIETKDWDEFITKQDVIVDTRNDYEVEVGTFKAAINPYTETFKQFPAWVEQNAELLKGKKIAMFCTGGIRCEKSTSLLKSMGHEEVYHLKGGILQYLEDTQNKNNLWQGECFVFDDRRAVADDLAPAEGYWLERK</sequence>
<dbReference type="EC" id="1.14.-.-" evidence="1"/>
<dbReference type="EMBL" id="CP000087">
    <property type="protein sequence ID" value="ABE05250.1"/>
    <property type="molecule type" value="Genomic_DNA"/>
</dbReference>
<dbReference type="RefSeq" id="WP_011477828.1">
    <property type="nucleotide sequence ID" value="NC_007940.1"/>
</dbReference>
<dbReference type="SMR" id="Q1RHB4"/>
<dbReference type="KEGG" id="rbe:RBE_1169"/>
<dbReference type="eggNOG" id="COG1054">
    <property type="taxonomic scope" value="Bacteria"/>
</dbReference>
<dbReference type="HOGENOM" id="CLU_038878_0_1_5"/>
<dbReference type="OrthoDB" id="9778326at2"/>
<dbReference type="Proteomes" id="UP000001951">
    <property type="component" value="Chromosome"/>
</dbReference>
<dbReference type="GO" id="GO:0016705">
    <property type="term" value="F:oxidoreductase activity, acting on paired donors, with incorporation or reduction of molecular oxygen"/>
    <property type="evidence" value="ECO:0007669"/>
    <property type="project" value="UniProtKB-UniRule"/>
</dbReference>
<dbReference type="GO" id="GO:0006400">
    <property type="term" value="P:tRNA modification"/>
    <property type="evidence" value="ECO:0007669"/>
    <property type="project" value="UniProtKB-UniRule"/>
</dbReference>
<dbReference type="CDD" id="cd01518">
    <property type="entry name" value="RHOD_YceA"/>
    <property type="match status" value="1"/>
</dbReference>
<dbReference type="Gene3D" id="3.30.70.100">
    <property type="match status" value="1"/>
</dbReference>
<dbReference type="Gene3D" id="3.40.250.10">
    <property type="entry name" value="Rhodanese-like domain"/>
    <property type="match status" value="1"/>
</dbReference>
<dbReference type="HAMAP" id="MF_00469">
    <property type="entry name" value="TrhO"/>
    <property type="match status" value="1"/>
</dbReference>
<dbReference type="InterPro" id="IPR001763">
    <property type="entry name" value="Rhodanese-like_dom"/>
</dbReference>
<dbReference type="InterPro" id="IPR036873">
    <property type="entry name" value="Rhodanese-like_dom_sf"/>
</dbReference>
<dbReference type="InterPro" id="IPR020936">
    <property type="entry name" value="TrhO"/>
</dbReference>
<dbReference type="InterPro" id="IPR040503">
    <property type="entry name" value="TRHO_N"/>
</dbReference>
<dbReference type="NCBIfam" id="NF002397">
    <property type="entry name" value="PRK01415.1"/>
    <property type="match status" value="1"/>
</dbReference>
<dbReference type="PANTHER" id="PTHR43268:SF3">
    <property type="entry name" value="RHODANESE-LIKE DOMAIN-CONTAINING PROTEIN 7-RELATED"/>
    <property type="match status" value="1"/>
</dbReference>
<dbReference type="PANTHER" id="PTHR43268">
    <property type="entry name" value="THIOSULFATE SULFURTRANSFERASE/RHODANESE-LIKE DOMAIN-CONTAINING PROTEIN 2"/>
    <property type="match status" value="1"/>
</dbReference>
<dbReference type="Pfam" id="PF00581">
    <property type="entry name" value="Rhodanese"/>
    <property type="match status" value="1"/>
</dbReference>
<dbReference type="Pfam" id="PF17773">
    <property type="entry name" value="UPF0176_N"/>
    <property type="match status" value="1"/>
</dbReference>
<dbReference type="SMART" id="SM00450">
    <property type="entry name" value="RHOD"/>
    <property type="match status" value="1"/>
</dbReference>
<dbReference type="SUPFAM" id="SSF52821">
    <property type="entry name" value="Rhodanese/Cell cycle control phosphatase"/>
    <property type="match status" value="1"/>
</dbReference>
<dbReference type="PROSITE" id="PS50206">
    <property type="entry name" value="RHODANESE_3"/>
    <property type="match status" value="1"/>
</dbReference>
<accession>Q1RHB4</accession>
<keyword id="KW-0560">Oxidoreductase</keyword>
<keyword id="KW-0819">tRNA processing</keyword>
<feature type="chain" id="PRO_0000242940" description="tRNA uridine(34) hydroxylase">
    <location>
        <begin position="1"/>
        <end position="247"/>
    </location>
</feature>
<feature type="domain" description="Rhodanese" evidence="1">
    <location>
        <begin position="123"/>
        <end position="217"/>
    </location>
</feature>
<feature type="active site" description="Cysteine persulfide intermediate" evidence="1">
    <location>
        <position position="177"/>
    </location>
</feature>
<name>TRHO_RICBR</name>
<proteinExistence type="inferred from homology"/>
<protein>
    <recommendedName>
        <fullName evidence="1">tRNA uridine(34) hydroxylase</fullName>
        <ecNumber evidence="1">1.14.-.-</ecNumber>
    </recommendedName>
    <alternativeName>
        <fullName evidence="1">tRNA hydroxylation protein O</fullName>
    </alternativeName>
</protein>
<gene>
    <name evidence="1" type="primary">trhO</name>
    <name type="ordered locus">RBE_1169</name>
</gene>
<comment type="function">
    <text evidence="1">Catalyzes oxygen-dependent 5-hydroxyuridine (ho5U) modification at position 34 in tRNAs.</text>
</comment>
<comment type="catalytic activity">
    <reaction evidence="1">
        <text>uridine(34) in tRNA + AH2 + O2 = 5-hydroxyuridine(34) in tRNA + A + H2O</text>
        <dbReference type="Rhea" id="RHEA:64224"/>
        <dbReference type="Rhea" id="RHEA-COMP:11727"/>
        <dbReference type="Rhea" id="RHEA-COMP:13381"/>
        <dbReference type="ChEBI" id="CHEBI:13193"/>
        <dbReference type="ChEBI" id="CHEBI:15377"/>
        <dbReference type="ChEBI" id="CHEBI:15379"/>
        <dbReference type="ChEBI" id="CHEBI:17499"/>
        <dbReference type="ChEBI" id="CHEBI:65315"/>
        <dbReference type="ChEBI" id="CHEBI:136877"/>
    </reaction>
</comment>
<comment type="similarity">
    <text evidence="1">Belongs to the TrhO family.</text>
</comment>
<reference key="1">
    <citation type="journal article" date="2006" name="PLoS Genet.">
        <title>Genome sequence of Rickettsia bellii illuminates the role of amoebae in gene exchanges between intracellular pathogens.</title>
        <authorList>
            <person name="Ogata H."/>
            <person name="La Scola B."/>
            <person name="Audic S."/>
            <person name="Renesto P."/>
            <person name="Blanc G."/>
            <person name="Robert C."/>
            <person name="Fournier P.-E."/>
            <person name="Claverie J.-M."/>
            <person name="Raoult D."/>
        </authorList>
    </citation>
    <scope>NUCLEOTIDE SEQUENCE [LARGE SCALE GENOMIC DNA]</scope>
    <source>
        <strain>RML369-C</strain>
    </source>
</reference>
<organism>
    <name type="scientific">Rickettsia bellii (strain RML369-C)</name>
    <dbReference type="NCBI Taxonomy" id="336407"/>
    <lineage>
        <taxon>Bacteria</taxon>
        <taxon>Pseudomonadati</taxon>
        <taxon>Pseudomonadota</taxon>
        <taxon>Alphaproteobacteria</taxon>
        <taxon>Rickettsiales</taxon>
        <taxon>Rickettsiaceae</taxon>
        <taxon>Rickettsieae</taxon>
        <taxon>Rickettsia</taxon>
        <taxon>belli group</taxon>
    </lineage>
</organism>
<evidence type="ECO:0000255" key="1">
    <source>
        <dbReference type="HAMAP-Rule" id="MF_00469"/>
    </source>
</evidence>